<name>PSBC_SORBI</name>
<accession>A1E9R0</accession>
<evidence type="ECO:0000255" key="1">
    <source>
        <dbReference type="HAMAP-Rule" id="MF_01496"/>
    </source>
</evidence>
<gene>
    <name evidence="1" type="primary">psbC</name>
</gene>
<reference key="1">
    <citation type="journal article" date="2007" name="Theor. Appl. Genet.">
        <title>Complete chloroplast genome sequences of Hordeum vulgare, Sorghum bicolor and Agrostis stolonifera, and comparative analyses with other grass genomes.</title>
        <authorList>
            <person name="Saski C."/>
            <person name="Lee S.-B."/>
            <person name="Fjellheim S."/>
            <person name="Guda C."/>
            <person name="Jansen R.K."/>
            <person name="Luo H."/>
            <person name="Tomkins J."/>
            <person name="Rognli O.A."/>
            <person name="Daniell H."/>
            <person name="Clarke J.L."/>
        </authorList>
    </citation>
    <scope>NUCLEOTIDE SEQUENCE [LARGE SCALE GENOMIC DNA]</scope>
    <source>
        <strain>cv. BTx623</strain>
    </source>
</reference>
<geneLocation type="chloroplast"/>
<feature type="propeptide" id="PRO_0000431211" evidence="1">
    <location>
        <begin position="1"/>
        <end position="14"/>
    </location>
</feature>
<feature type="chain" id="PRO_0000361498" description="Photosystem II CP43 reaction center protein" evidence="1">
    <location>
        <begin position="15"/>
        <end position="473"/>
    </location>
</feature>
<feature type="transmembrane region" description="Helical" evidence="1">
    <location>
        <begin position="69"/>
        <end position="93"/>
    </location>
</feature>
<feature type="transmembrane region" description="Helical" evidence="1">
    <location>
        <begin position="134"/>
        <end position="155"/>
    </location>
</feature>
<feature type="transmembrane region" description="Helical" evidence="1">
    <location>
        <begin position="178"/>
        <end position="200"/>
    </location>
</feature>
<feature type="transmembrane region" description="Helical" evidence="1">
    <location>
        <begin position="255"/>
        <end position="275"/>
    </location>
</feature>
<feature type="transmembrane region" description="Helical" evidence="1">
    <location>
        <begin position="291"/>
        <end position="312"/>
    </location>
</feature>
<feature type="transmembrane region" description="Helical" evidence="1">
    <location>
        <begin position="447"/>
        <end position="471"/>
    </location>
</feature>
<feature type="binding site" evidence="1">
    <location>
        <position position="367"/>
    </location>
    <ligand>
        <name>[CaMn4O5] cluster</name>
        <dbReference type="ChEBI" id="CHEBI:189552"/>
    </ligand>
</feature>
<feature type="modified residue" description="N-acetylthreonine" evidence="1">
    <location>
        <position position="15"/>
    </location>
</feature>
<feature type="modified residue" description="Phosphothreonine" evidence="1">
    <location>
        <position position="15"/>
    </location>
</feature>
<keyword id="KW-0007">Acetylation</keyword>
<keyword id="KW-0148">Chlorophyll</keyword>
<keyword id="KW-0150">Chloroplast</keyword>
<keyword id="KW-0157">Chromophore</keyword>
<keyword id="KW-0464">Manganese</keyword>
<keyword id="KW-0472">Membrane</keyword>
<keyword id="KW-0479">Metal-binding</keyword>
<keyword id="KW-0597">Phosphoprotein</keyword>
<keyword id="KW-0602">Photosynthesis</keyword>
<keyword id="KW-0604">Photosystem II</keyword>
<keyword id="KW-0934">Plastid</keyword>
<keyword id="KW-1185">Reference proteome</keyword>
<keyword id="KW-0793">Thylakoid</keyword>
<keyword id="KW-0812">Transmembrane</keyword>
<keyword id="KW-1133">Transmembrane helix</keyword>
<protein>
    <recommendedName>
        <fullName evidence="1">Photosystem II CP43 reaction center protein</fullName>
    </recommendedName>
    <alternativeName>
        <fullName evidence="1">PSII 43 kDa protein</fullName>
    </alternativeName>
    <alternativeName>
        <fullName evidence="1">Protein CP-43</fullName>
    </alternativeName>
</protein>
<organism>
    <name type="scientific">Sorghum bicolor</name>
    <name type="common">Sorghum</name>
    <name type="synonym">Sorghum vulgare</name>
    <dbReference type="NCBI Taxonomy" id="4558"/>
    <lineage>
        <taxon>Eukaryota</taxon>
        <taxon>Viridiplantae</taxon>
        <taxon>Streptophyta</taxon>
        <taxon>Embryophyta</taxon>
        <taxon>Tracheophyta</taxon>
        <taxon>Spermatophyta</taxon>
        <taxon>Magnoliopsida</taxon>
        <taxon>Liliopsida</taxon>
        <taxon>Poales</taxon>
        <taxon>Poaceae</taxon>
        <taxon>PACMAD clade</taxon>
        <taxon>Panicoideae</taxon>
        <taxon>Andropogonodae</taxon>
        <taxon>Andropogoneae</taxon>
        <taxon>Sorghinae</taxon>
        <taxon>Sorghum</taxon>
    </lineage>
</organism>
<dbReference type="EMBL" id="EF115542">
    <property type="protein sequence ID" value="ABK79482.1"/>
    <property type="molecule type" value="Genomic_DNA"/>
</dbReference>
<dbReference type="RefSeq" id="YP_899393.1">
    <property type="nucleotide sequence ID" value="NC_008602.1"/>
</dbReference>
<dbReference type="SMR" id="A1E9R0"/>
<dbReference type="FunCoup" id="A1E9R0">
    <property type="interactions" value="389"/>
</dbReference>
<dbReference type="STRING" id="4558.A1E9R0"/>
<dbReference type="GeneID" id="4549104"/>
<dbReference type="KEGG" id="sbi:4549104"/>
<dbReference type="eggNOG" id="ENOG502QR3X">
    <property type="taxonomic scope" value="Eukaryota"/>
</dbReference>
<dbReference type="InParanoid" id="A1E9R0"/>
<dbReference type="OrthoDB" id="634232at2759"/>
<dbReference type="Proteomes" id="UP000000768">
    <property type="component" value="Chloroplast"/>
</dbReference>
<dbReference type="ExpressionAtlas" id="A1E9R0">
    <property type="expression patterns" value="baseline"/>
</dbReference>
<dbReference type="GO" id="GO:0009535">
    <property type="term" value="C:chloroplast thylakoid membrane"/>
    <property type="evidence" value="ECO:0007669"/>
    <property type="project" value="UniProtKB-SubCell"/>
</dbReference>
<dbReference type="GO" id="GO:0009523">
    <property type="term" value="C:photosystem II"/>
    <property type="evidence" value="ECO:0007669"/>
    <property type="project" value="UniProtKB-KW"/>
</dbReference>
<dbReference type="GO" id="GO:0016168">
    <property type="term" value="F:chlorophyll binding"/>
    <property type="evidence" value="ECO:0007669"/>
    <property type="project" value="UniProtKB-UniRule"/>
</dbReference>
<dbReference type="GO" id="GO:0045156">
    <property type="term" value="F:electron transporter, transferring electrons within the cyclic electron transport pathway of photosynthesis activity"/>
    <property type="evidence" value="ECO:0007669"/>
    <property type="project" value="InterPro"/>
</dbReference>
<dbReference type="GO" id="GO:0046872">
    <property type="term" value="F:metal ion binding"/>
    <property type="evidence" value="ECO:0007669"/>
    <property type="project" value="UniProtKB-KW"/>
</dbReference>
<dbReference type="GO" id="GO:0009772">
    <property type="term" value="P:photosynthetic electron transport in photosystem II"/>
    <property type="evidence" value="ECO:0007669"/>
    <property type="project" value="InterPro"/>
</dbReference>
<dbReference type="FunFam" id="1.10.10.670:FF:000001">
    <property type="entry name" value="Photosystem II CP43 reaction center protein"/>
    <property type="match status" value="1"/>
</dbReference>
<dbReference type="Gene3D" id="1.10.10.670">
    <property type="entry name" value="photosystem ii from thermosynechococcus elongatus"/>
    <property type="match status" value="1"/>
</dbReference>
<dbReference type="HAMAP" id="MF_01496">
    <property type="entry name" value="PSII_PsbC_CP43"/>
    <property type="match status" value="1"/>
</dbReference>
<dbReference type="InterPro" id="IPR000932">
    <property type="entry name" value="PS_antenna-like"/>
</dbReference>
<dbReference type="InterPro" id="IPR036001">
    <property type="entry name" value="PS_II_antenna-like_sf"/>
</dbReference>
<dbReference type="InterPro" id="IPR005869">
    <property type="entry name" value="PSII_PsbC"/>
</dbReference>
<dbReference type="InterPro" id="IPR044900">
    <property type="entry name" value="PSII_PsbC_sf"/>
</dbReference>
<dbReference type="NCBIfam" id="TIGR01153">
    <property type="entry name" value="psbC"/>
    <property type="match status" value="1"/>
</dbReference>
<dbReference type="Pfam" id="PF00421">
    <property type="entry name" value="PSII"/>
    <property type="match status" value="1"/>
</dbReference>
<dbReference type="SUPFAM" id="SSF161077">
    <property type="entry name" value="Photosystem II antenna protein-like"/>
    <property type="match status" value="1"/>
</dbReference>
<sequence length="473" mass="51968">MKILYSLRRFYHVETLFNGTFVLAGRDQETTGFAWWAGNARLINLSGKLLGAHVAHAGLIVFWAGAMNLFEVAHFVPEKPMYEQGLILLPHLATLGWGVGPGGEVLDTFPYFVSGVLHLISSAVLGFGGIYHALLGPETLEESFPFFGYVWKDRNKMTTILGIHLILLGLGAFLLVLKALYFGGVYDTWAPGGGDVRKITNLTLSPGVIFGYLLKSPFGGEGWIVSVDDLEDIIGGHVWLGSICVLGGIWHILTKPFAWARRAFVWSGEAYLSYSLGALSVFGFIACCFVWFNNTAYPSEFYGPTGPEASQAQAFTFLVRDQRLGANVGSAQGPTGLGKYLMRSPTGEVIFGGETMRFWDLRAPWLEPLRGPNGLDLSRLKKDIQPWQERRSAEYMTHAPLGSLNSVGGVATEINAVNYVSPRSWLATSHFVLGFFFFVGHLWHAGRARAAAAGFEKGIDRDLEPVLYMTPLN</sequence>
<comment type="function">
    <text evidence="1">One of the components of the core complex of photosystem II (PSII). It binds chlorophyll and helps catalyze the primary light-induced photochemical processes of PSII. PSII is a light-driven water:plastoquinone oxidoreductase, using light energy to abstract electrons from H(2)O, generating O(2) and a proton gradient subsequently used for ATP formation.</text>
</comment>
<comment type="cofactor">
    <text evidence="1">Binds multiple chlorophylls and provides some of the ligands for the Ca-4Mn-5O cluster of the oxygen-evolving complex. It may also provide a ligand for a Cl- that is required for oxygen evolution. PSII binds additional chlorophylls, carotenoids and specific lipids.</text>
</comment>
<comment type="subunit">
    <text evidence="1">PSII is composed of 1 copy each of membrane proteins PsbA, PsbB, PsbC, PsbD, PsbE, PsbF, PsbH, PsbI, PsbJ, PsbK, PsbL, PsbM, PsbT, PsbX, PsbY, PsbZ, Psb30/Ycf12, at least 3 peripheral proteins of the oxygen-evolving complex and a large number of cofactors. It forms dimeric complexes.</text>
</comment>
<comment type="subcellular location">
    <subcellularLocation>
        <location evidence="1">Plastid</location>
        <location evidence="1">Chloroplast thylakoid membrane</location>
        <topology evidence="1">Multi-pass membrane protein</topology>
    </subcellularLocation>
</comment>
<comment type="similarity">
    <text evidence="1">Belongs to the PsbB/PsbC family. PsbC subfamily.</text>
</comment>
<proteinExistence type="inferred from homology"/>